<proteinExistence type="evidence at protein level"/>
<protein>
    <recommendedName>
        <fullName>Sodium- and chloride-dependent transporter XTRP3A</fullName>
    </recommendedName>
    <alternativeName>
        <fullName>IMINO-B</fullName>
    </alternativeName>
    <alternativeName>
        <fullName>Solute carrier family 6 member 20A</fullName>
    </alternativeName>
    <alternativeName>
        <fullName>X transporter protein 3 similar 1</fullName>
    </alternativeName>
</protein>
<comment type="function">
    <text evidence="3 5">Mediates the Na(+)- and Cl(-)-dependent uptake of imino acids such as L-proline, N-methyl-L-proline and pipecolate as well as N-methylated amino acids (PubMed:15689184). Also transports glycine, regulates proline and glycine homeostasis in the brain playing a role in the modulation of NMDAR currents (PubMed:33428810).</text>
</comment>
<comment type="catalytic activity">
    <reaction evidence="3 5">
        <text>L-proline(out) + chloride(out) + 2 Na(+)(out) = L-proline(in) + chloride(in) + 2 Na(+)(in)</text>
        <dbReference type="Rhea" id="RHEA:71263"/>
        <dbReference type="ChEBI" id="CHEBI:17996"/>
        <dbReference type="ChEBI" id="CHEBI:29101"/>
        <dbReference type="ChEBI" id="CHEBI:60039"/>
    </reaction>
</comment>
<comment type="catalytic activity">
    <reaction evidence="3">
        <text>4-hydroxy-L-proline(out) + chloride(out) + 2 Na(+)(out) = 4-hydroxy-L-proline(in) + chloride(in) + 2 Na(+)(in)</text>
        <dbReference type="Rhea" id="RHEA:72223"/>
        <dbReference type="ChEBI" id="CHEBI:17996"/>
        <dbReference type="ChEBI" id="CHEBI:29101"/>
        <dbReference type="ChEBI" id="CHEBI:58419"/>
    </reaction>
</comment>
<comment type="catalytic activity">
    <reaction evidence="3">
        <text>2-methyl-2-(methylamino)propanoate(out) + chloride(out) + 2 Na(+)(out) = 2-methyl-2-(methylamino)propanoate(in) + chloride(in) + 2 Na(+)(in)</text>
        <dbReference type="Rhea" id="RHEA:72235"/>
        <dbReference type="ChEBI" id="CHEBI:17996"/>
        <dbReference type="ChEBI" id="CHEBI:29101"/>
        <dbReference type="ChEBI" id="CHEBI:192077"/>
    </reaction>
</comment>
<comment type="catalytic activity">
    <reaction evidence="3">
        <text>L-pipecolate(out) + chloride(out) + 2 Na(+)(out) = L-pipecolate(in) + chloride(in) + 2 Na(+)(in)</text>
        <dbReference type="Rhea" id="RHEA:71267"/>
        <dbReference type="ChEBI" id="CHEBI:17996"/>
        <dbReference type="ChEBI" id="CHEBI:29101"/>
        <dbReference type="ChEBI" id="CHEBI:61185"/>
    </reaction>
</comment>
<comment type="catalytic activity">
    <reaction evidence="3">
        <text>glycine betaine(out) + chloride(out) + 2 Na(+)(out) = glycine betaine(in) + chloride(in) + 2 Na(+)(in)</text>
        <dbReference type="Rhea" id="RHEA:70735"/>
        <dbReference type="ChEBI" id="CHEBI:17750"/>
        <dbReference type="ChEBI" id="CHEBI:17996"/>
        <dbReference type="ChEBI" id="CHEBI:29101"/>
    </reaction>
</comment>
<comment type="catalytic activity">
    <reaction evidence="5">
        <text>glycine(out) + chloride(out) + 2 Na(+)(out) = glycine(in) + chloride(in) + 2 Na(+)(in)</text>
        <dbReference type="Rhea" id="RHEA:70691"/>
        <dbReference type="ChEBI" id="CHEBI:17996"/>
        <dbReference type="ChEBI" id="CHEBI:29101"/>
        <dbReference type="ChEBI" id="CHEBI:57305"/>
    </reaction>
</comment>
<comment type="biophysicochemical properties">
    <kinetics>
        <KM evidence="5">19.64 uM for proline</KM>
        <KM evidence="5">63.16 uM for glycine</KM>
    </kinetics>
</comment>
<comment type="subcellular location">
    <subcellularLocation>
        <location evidence="4">Apical cell membrane</location>
        <topology evidence="4">Multi-pass membrane protein</topology>
    </subcellularLocation>
    <text evidence="4">Located in the apical brush border membrane of kidney proximal tubule cells and in the apical membrane of enterocytes lining the intestinal villi.</text>
</comment>
<comment type="tissue specificity">
    <text evidence="3 5">Expressed in brain, kidney, small intestine, thymus, spleen and lung. In the brain, expressed in cerebellum, cortex and brain stem. Not detected in liver, muscle or heart (PubMed:15689184). In brain, widespread in various regions, including the meninges, choroid plexus, cortex, hippocampus and thalamus (PubMed:33428810).</text>
</comment>
<comment type="developmental stage">
    <text evidence="2">Expression in kidney is highly induced 3 days after birth.</text>
</comment>
<comment type="similarity">
    <text evidence="8">Belongs to the sodium:neurotransmitter symporter (SNF) (TC 2.A.22) family. SLC6A20 subfamily.</text>
</comment>
<gene>
    <name evidence="13" type="primary">Slc6a20a</name>
    <name evidence="12" type="synonym">Slc6a20</name>
    <name evidence="7" type="synonym">Xt3s1</name>
    <name evidence="6" type="synonym">Xtm3s1</name>
    <name evidence="11 13" type="synonym">Xtrp3s1</name>
</gene>
<feature type="chain" id="PRO_0000343522" description="Sodium- and chloride-dependent transporter XTRP3A">
    <location>
        <begin position="1"/>
        <end position="592"/>
    </location>
</feature>
<feature type="topological domain" description="Cytoplasmic" evidence="1">
    <location>
        <begin position="1"/>
        <end position="7"/>
    </location>
</feature>
<feature type="transmembrane region" description="Helical; Name=1" evidence="1">
    <location>
        <begin position="8"/>
        <end position="28"/>
    </location>
</feature>
<feature type="topological domain" description="Extracellular" evidence="1">
    <location>
        <begin position="29"/>
        <end position="42"/>
    </location>
</feature>
<feature type="transmembrane region" description="Helical; Name=2" evidence="1">
    <location>
        <begin position="43"/>
        <end position="63"/>
    </location>
</feature>
<feature type="topological domain" description="Cytoplasmic" evidence="1">
    <location>
        <begin position="64"/>
        <end position="79"/>
    </location>
</feature>
<feature type="transmembrane region" description="Helical; Name=3" evidence="1">
    <location>
        <begin position="80"/>
        <end position="100"/>
    </location>
</feature>
<feature type="topological domain" description="Extracellular" evidence="1">
    <location>
        <begin position="101"/>
        <end position="165"/>
    </location>
</feature>
<feature type="transmembrane region" description="Helical; Name=4" evidence="1">
    <location>
        <begin position="166"/>
        <end position="186"/>
    </location>
</feature>
<feature type="topological domain" description="Cytoplasmic" evidence="1">
    <location>
        <begin position="187"/>
        <end position="194"/>
    </location>
</feature>
<feature type="transmembrane region" description="Helical; Name=5" evidence="1">
    <location>
        <begin position="195"/>
        <end position="215"/>
    </location>
</feature>
<feature type="topological domain" description="Extracellular" evidence="1">
    <location>
        <begin position="216"/>
        <end position="241"/>
    </location>
</feature>
<feature type="transmembrane region" description="Helical; Name=6" evidence="1">
    <location>
        <begin position="242"/>
        <end position="262"/>
    </location>
</feature>
<feature type="topological domain" description="Cytoplasmic" evidence="1">
    <location>
        <begin position="263"/>
        <end position="276"/>
    </location>
</feature>
<feature type="transmembrane region" description="Helical; Name=7" evidence="1">
    <location>
        <begin position="277"/>
        <end position="297"/>
    </location>
</feature>
<feature type="topological domain" description="Extracellular" evidence="1">
    <location>
        <begin position="298"/>
        <end position="389"/>
    </location>
</feature>
<feature type="transmembrane region" description="Helical; Name=8" evidence="1">
    <location>
        <begin position="390"/>
        <end position="410"/>
    </location>
</feature>
<feature type="topological domain" description="Cytoplasmic" evidence="1">
    <location>
        <begin position="411"/>
        <end position="431"/>
    </location>
</feature>
<feature type="transmembrane region" description="Helical; Name=9" evidence="1">
    <location>
        <begin position="432"/>
        <end position="452"/>
    </location>
</feature>
<feature type="topological domain" description="Extracellular" evidence="1">
    <location>
        <begin position="453"/>
        <end position="465"/>
    </location>
</feature>
<feature type="transmembrane region" description="Helical; Name=10" evidence="1">
    <location>
        <begin position="466"/>
        <end position="486"/>
    </location>
</feature>
<feature type="topological domain" description="Cytoplasmic" evidence="1">
    <location>
        <begin position="487"/>
        <end position="504"/>
    </location>
</feature>
<feature type="transmembrane region" description="Helical; Name=11" evidence="1">
    <location>
        <begin position="505"/>
        <end position="525"/>
    </location>
</feature>
<feature type="topological domain" description="Extracellular" evidence="1">
    <location>
        <begin position="526"/>
        <end position="554"/>
    </location>
</feature>
<feature type="transmembrane region" description="Helical; Name=12" evidence="1">
    <location>
        <begin position="555"/>
        <end position="575"/>
    </location>
</feature>
<feature type="topological domain" description="Cytoplasmic" evidence="1">
    <location>
        <begin position="576"/>
        <end position="592"/>
    </location>
</feature>
<feature type="glycosylation site" description="N-linked (GlcNAc...) asparagine" evidence="1">
    <location>
        <position position="131"/>
    </location>
</feature>
<feature type="sequence conflict" description="In Ref. 3; BAE24391." evidence="8" ref="3">
    <original>L</original>
    <variation>P</variation>
    <location>
        <position position="58"/>
    </location>
</feature>
<accession>Q8VDB9</accession>
<accession>Q3USE2</accession>
<keyword id="KW-0029">Amino-acid transport</keyword>
<keyword id="KW-1003">Cell membrane</keyword>
<keyword id="KW-0325">Glycoprotein</keyword>
<keyword id="KW-0472">Membrane</keyword>
<keyword id="KW-1185">Reference proteome</keyword>
<keyword id="KW-0769">Symport</keyword>
<keyword id="KW-0812">Transmembrane</keyword>
<keyword id="KW-1133">Transmembrane helix</keyword>
<keyword id="KW-0813">Transport</keyword>
<dbReference type="EMBL" id="AJ428067">
    <property type="protein sequence ID" value="CAD20989.1"/>
    <property type="molecule type" value="mRNA"/>
</dbReference>
<dbReference type="EMBL" id="AJ964961">
    <property type="protein sequence ID" value="CAI80736.1"/>
    <property type="molecule type" value="mRNA"/>
</dbReference>
<dbReference type="EMBL" id="AK140445">
    <property type="protein sequence ID" value="BAE24391.1"/>
    <property type="molecule type" value="mRNA"/>
</dbReference>
<dbReference type="EMBL" id="BC118933">
    <property type="protein sequence ID" value="AAI18934.1"/>
    <property type="molecule type" value="mRNA"/>
</dbReference>
<dbReference type="CCDS" id="CCDS40817.1"/>
<dbReference type="RefSeq" id="NP_631881.1">
    <property type="nucleotide sequence ID" value="NM_139142.2"/>
</dbReference>
<dbReference type="SMR" id="Q8VDB9"/>
<dbReference type="CORUM" id="Q8VDB9"/>
<dbReference type="FunCoup" id="Q8VDB9">
    <property type="interactions" value="7"/>
</dbReference>
<dbReference type="STRING" id="10090.ENSMUSP00000047690"/>
<dbReference type="GlyCosmos" id="Q8VDB9">
    <property type="glycosylation" value="1 site, No reported glycans"/>
</dbReference>
<dbReference type="GlyGen" id="Q8VDB9">
    <property type="glycosylation" value="1 site"/>
</dbReference>
<dbReference type="iPTMnet" id="Q8VDB9"/>
<dbReference type="PhosphoSitePlus" id="Q8VDB9"/>
<dbReference type="jPOST" id="Q8VDB9"/>
<dbReference type="PaxDb" id="10090-ENSMUSP00000047690"/>
<dbReference type="ProteomicsDB" id="253387"/>
<dbReference type="DNASU" id="102680"/>
<dbReference type="Ensembl" id="ENSMUST00000040960.13">
    <property type="protein sequence ID" value="ENSMUSP00000047690.7"/>
    <property type="gene ID" value="ENSMUSG00000036814.14"/>
</dbReference>
<dbReference type="GeneID" id="102680"/>
<dbReference type="KEGG" id="mmu:102680"/>
<dbReference type="UCSC" id="uc009sgk.1">
    <property type="organism name" value="mouse"/>
</dbReference>
<dbReference type="AGR" id="MGI:2143217"/>
<dbReference type="CTD" id="102680"/>
<dbReference type="MGI" id="MGI:2143217">
    <property type="gene designation" value="Slc6a20a"/>
</dbReference>
<dbReference type="VEuPathDB" id="HostDB:ENSMUSG00000036814"/>
<dbReference type="eggNOG" id="KOG3659">
    <property type="taxonomic scope" value="Eukaryota"/>
</dbReference>
<dbReference type="GeneTree" id="ENSGT00940000155873"/>
<dbReference type="HOGENOM" id="CLU_006855_7_2_1"/>
<dbReference type="InParanoid" id="Q8VDB9"/>
<dbReference type="OMA" id="YHNNFER"/>
<dbReference type="OrthoDB" id="6581954at2759"/>
<dbReference type="PhylomeDB" id="Q8VDB9"/>
<dbReference type="TreeFam" id="TF343812"/>
<dbReference type="Reactome" id="R-MMU-352230">
    <property type="pathway name" value="Amino acid transport across the plasma membrane"/>
</dbReference>
<dbReference type="Reactome" id="R-MMU-442660">
    <property type="pathway name" value="Na+/Cl- dependent neurotransmitter transporters"/>
</dbReference>
<dbReference type="BioGRID-ORCS" id="102680">
    <property type="hits" value="5 hits in 79 CRISPR screens"/>
</dbReference>
<dbReference type="ChiTaRS" id="Slc6a20a">
    <property type="organism name" value="mouse"/>
</dbReference>
<dbReference type="PRO" id="PR:Q8VDB9"/>
<dbReference type="Proteomes" id="UP000000589">
    <property type="component" value="Chromosome 9"/>
</dbReference>
<dbReference type="RNAct" id="Q8VDB9">
    <property type="molecule type" value="protein"/>
</dbReference>
<dbReference type="Bgee" id="ENSMUSG00000036814">
    <property type="expression patterns" value="Expressed in small intestine Peyer's patch and 121 other cell types or tissues"/>
</dbReference>
<dbReference type="ExpressionAtlas" id="Q8VDB9">
    <property type="expression patterns" value="baseline and differential"/>
</dbReference>
<dbReference type="GO" id="GO:0016324">
    <property type="term" value="C:apical plasma membrane"/>
    <property type="evidence" value="ECO:0000314"/>
    <property type="project" value="UniProtKB"/>
</dbReference>
<dbReference type="GO" id="GO:0015171">
    <property type="term" value="F:amino acid transmembrane transporter activity"/>
    <property type="evidence" value="ECO:0000314"/>
    <property type="project" value="UniProtKB"/>
</dbReference>
<dbReference type="GO" id="GO:0015193">
    <property type="term" value="F:L-proline transmembrane transporter activity"/>
    <property type="evidence" value="ECO:0000314"/>
    <property type="project" value="MGI"/>
</dbReference>
<dbReference type="GO" id="GO:0015175">
    <property type="term" value="F:neutral L-amino acid transmembrane transporter activity"/>
    <property type="evidence" value="ECO:0000314"/>
    <property type="project" value="ARUK-UCL"/>
</dbReference>
<dbReference type="GO" id="GO:0005298">
    <property type="term" value="F:proline:sodium symporter activity"/>
    <property type="evidence" value="ECO:0000314"/>
    <property type="project" value="UniProtKB"/>
</dbReference>
<dbReference type="GO" id="GO:0015370">
    <property type="term" value="F:solute:sodium symporter activity"/>
    <property type="evidence" value="ECO:0000314"/>
    <property type="project" value="UniProtKB"/>
</dbReference>
<dbReference type="GO" id="GO:0006865">
    <property type="term" value="P:amino acid transport"/>
    <property type="evidence" value="ECO:0000314"/>
    <property type="project" value="UniProtKB"/>
</dbReference>
<dbReference type="GO" id="GO:0015838">
    <property type="term" value="P:amino-acid betaine transport"/>
    <property type="evidence" value="ECO:0000314"/>
    <property type="project" value="MGI"/>
</dbReference>
<dbReference type="GO" id="GO:1903804">
    <property type="term" value="P:glycine import across plasma membrane"/>
    <property type="evidence" value="ECO:0000314"/>
    <property type="project" value="UniProtKB"/>
</dbReference>
<dbReference type="GO" id="GO:1904271">
    <property type="term" value="P:L-proline import across plasma membrane"/>
    <property type="evidence" value="ECO:0000314"/>
    <property type="project" value="UniProtKB"/>
</dbReference>
<dbReference type="GO" id="GO:1905647">
    <property type="term" value="P:proline import across plasma membrane"/>
    <property type="evidence" value="ECO:0000314"/>
    <property type="project" value="ARUK-UCL"/>
</dbReference>
<dbReference type="GO" id="GO:0035524">
    <property type="term" value="P:proline transmembrane transport"/>
    <property type="evidence" value="ECO:0000314"/>
    <property type="project" value="MGI"/>
</dbReference>
<dbReference type="InterPro" id="IPR000175">
    <property type="entry name" value="Na/ntran_symport"/>
</dbReference>
<dbReference type="InterPro" id="IPR002438">
    <property type="entry name" value="Neutral_aa_SLC6"/>
</dbReference>
<dbReference type="InterPro" id="IPR037272">
    <property type="entry name" value="SNS_sf"/>
</dbReference>
<dbReference type="PANTHER" id="PTHR11616:SF44">
    <property type="entry name" value="SODIUM- AND CHLORIDE-DEPENDENT TRANSPORTER XTRP3"/>
    <property type="match status" value="1"/>
</dbReference>
<dbReference type="PANTHER" id="PTHR11616">
    <property type="entry name" value="SODIUM/CHLORIDE DEPENDENT TRANSPORTER"/>
    <property type="match status" value="1"/>
</dbReference>
<dbReference type="Pfam" id="PF00209">
    <property type="entry name" value="SNF"/>
    <property type="match status" value="1"/>
</dbReference>
<dbReference type="PRINTS" id="PR00176">
    <property type="entry name" value="NANEUSMPORT"/>
</dbReference>
<dbReference type="PRINTS" id="PR01206">
    <property type="entry name" value="ORPHTRNSPORT"/>
</dbReference>
<dbReference type="SUPFAM" id="SSF161070">
    <property type="entry name" value="SNF-like"/>
    <property type="match status" value="1"/>
</dbReference>
<dbReference type="PROSITE" id="PS00610">
    <property type="entry name" value="NA_NEUROTRAN_SYMP_1"/>
    <property type="match status" value="1"/>
</dbReference>
<dbReference type="PROSITE" id="PS00754">
    <property type="entry name" value="NA_NEUROTRAN_SYMP_2"/>
    <property type="match status" value="1"/>
</dbReference>
<dbReference type="PROSITE" id="PS50267">
    <property type="entry name" value="NA_NEUROTRAN_SYMP_3"/>
    <property type="match status" value="1"/>
</dbReference>
<name>S620A_MOUSE</name>
<organism>
    <name type="scientific">Mus musculus</name>
    <name type="common">Mouse</name>
    <dbReference type="NCBI Taxonomy" id="10090"/>
    <lineage>
        <taxon>Eukaryota</taxon>
        <taxon>Metazoa</taxon>
        <taxon>Chordata</taxon>
        <taxon>Craniata</taxon>
        <taxon>Vertebrata</taxon>
        <taxon>Euteleostomi</taxon>
        <taxon>Mammalia</taxon>
        <taxon>Eutheria</taxon>
        <taxon>Euarchontoglires</taxon>
        <taxon>Glires</taxon>
        <taxon>Rodentia</taxon>
        <taxon>Myomorpha</taxon>
        <taxon>Muroidea</taxon>
        <taxon>Muridae</taxon>
        <taxon>Murinae</taxon>
        <taxon>Mus</taxon>
        <taxon>Mus</taxon>
    </lineage>
</organism>
<sequence length="592" mass="66178">MEKARPQWGHPLQFVFACISYAVGLGNVWRFPYLCQMYGGGSFLVPYIIMLIVEGMPLLYLELAVGQRMRQGSIGAWRTISPYLSGVGVASVVVSFFLSMYYNVINAWGFWYLFHSFQDPLPWSVCPLNSNHTGYDEECEKASSTQYFWYRKTLNISPSIQENGGVQWEPALCLTLAWLMVYLCILRGTESTGKVVYFTASMPYCVLIIYLVRGLTLHGATNGLMYMFTPKMEQLANPKAWINAATQIFFSLGLGFGSLIAFASYNEPSNNCQKHAIIVSIINSSTSIFASIVTFSIYGFKATFNYENCLNKVILLLTNSFDLEDGFLTVSNLEEVKNYLASTYPNKYSEVFPHIRNCSLESELDTAVQGTGLAFIVYTEAIKNMEVSQLWSVLYFFMLLMLGIGSMLGNTAAILTPLTDSKVISSYLPKEAISGLVCLINCAVGMVFTMEAGNYWFDIFNDYAATLSLLLIVLVETIAVCYVYGLKRFESDLRAMTGRTLSWYWKVMWAFVSPLLIVGLFIFYLSDYILTGTLQYQAWDATQGQLVTKDYPPHALAVIGLLVASSTMCIPLVALGTFIRNRLKRGGSAPVA</sequence>
<reference evidence="11" key="1">
    <citation type="journal article" date="2002" name="Mamm. Genome">
        <title>Comparative human/murine sequence analysis of the common eliminated region 1 from human 3p21.3.</title>
        <authorList>
            <person name="Kiss H."/>
            <person name="Darai E."/>
            <person name="Kiss C."/>
            <person name="Kost-Alimova M."/>
            <person name="Klein G."/>
            <person name="Dumanski J.P."/>
            <person name="Imreh S."/>
        </authorList>
    </citation>
    <scope>NUCLEOTIDE SEQUENCE [MRNA]</scope>
    <source>
        <strain evidence="11">BALB/cJ</strain>
    </source>
</reference>
<reference evidence="8 12" key="2">
    <citation type="journal article" date="2005" name="Biochem. J.">
        <title>Molecular cloning of the mouse IMINO system: an Na(+)- and Cl(-)-dependent proline transporter.</title>
        <authorList>
            <person name="Kowalczuk S."/>
            <person name="Broeer A."/>
            <person name="Munzinger M."/>
            <person name="Tietze N."/>
            <person name="Klingel K."/>
            <person name="Broeer S."/>
        </authorList>
    </citation>
    <scope>NUCLEOTIDE SEQUENCE [MRNA]</scope>
    <scope>FUNCTION</scope>
    <scope>TISSUE SPECIFICITY</scope>
    <scope>TRANSPORTER ACTIVITY</scope>
    <source>
        <strain evidence="12">C57BL/6J</strain>
    </source>
</reference>
<reference evidence="10" key="3">
    <citation type="journal article" date="2005" name="Science">
        <title>The transcriptional landscape of the mammalian genome.</title>
        <authorList>
            <person name="Carninci P."/>
            <person name="Kasukawa T."/>
            <person name="Katayama S."/>
            <person name="Gough J."/>
            <person name="Frith M.C."/>
            <person name="Maeda N."/>
            <person name="Oyama R."/>
            <person name="Ravasi T."/>
            <person name="Lenhard B."/>
            <person name="Wells C."/>
            <person name="Kodzius R."/>
            <person name="Shimokawa K."/>
            <person name="Bajic V.B."/>
            <person name="Brenner S.E."/>
            <person name="Batalov S."/>
            <person name="Forrest A.R."/>
            <person name="Zavolan M."/>
            <person name="Davis M.J."/>
            <person name="Wilming L.G."/>
            <person name="Aidinis V."/>
            <person name="Allen J.E."/>
            <person name="Ambesi-Impiombato A."/>
            <person name="Apweiler R."/>
            <person name="Aturaliya R.N."/>
            <person name="Bailey T.L."/>
            <person name="Bansal M."/>
            <person name="Baxter L."/>
            <person name="Beisel K.W."/>
            <person name="Bersano T."/>
            <person name="Bono H."/>
            <person name="Chalk A.M."/>
            <person name="Chiu K.P."/>
            <person name="Choudhary V."/>
            <person name="Christoffels A."/>
            <person name="Clutterbuck D.R."/>
            <person name="Crowe M.L."/>
            <person name="Dalla E."/>
            <person name="Dalrymple B.P."/>
            <person name="de Bono B."/>
            <person name="Della Gatta G."/>
            <person name="di Bernardo D."/>
            <person name="Down T."/>
            <person name="Engstrom P."/>
            <person name="Fagiolini M."/>
            <person name="Faulkner G."/>
            <person name="Fletcher C.F."/>
            <person name="Fukushima T."/>
            <person name="Furuno M."/>
            <person name="Futaki S."/>
            <person name="Gariboldi M."/>
            <person name="Georgii-Hemming P."/>
            <person name="Gingeras T.R."/>
            <person name="Gojobori T."/>
            <person name="Green R.E."/>
            <person name="Gustincich S."/>
            <person name="Harbers M."/>
            <person name="Hayashi Y."/>
            <person name="Hensch T.K."/>
            <person name="Hirokawa N."/>
            <person name="Hill D."/>
            <person name="Huminiecki L."/>
            <person name="Iacono M."/>
            <person name="Ikeo K."/>
            <person name="Iwama A."/>
            <person name="Ishikawa T."/>
            <person name="Jakt M."/>
            <person name="Kanapin A."/>
            <person name="Katoh M."/>
            <person name="Kawasawa Y."/>
            <person name="Kelso J."/>
            <person name="Kitamura H."/>
            <person name="Kitano H."/>
            <person name="Kollias G."/>
            <person name="Krishnan S.P."/>
            <person name="Kruger A."/>
            <person name="Kummerfeld S.K."/>
            <person name="Kurochkin I.V."/>
            <person name="Lareau L.F."/>
            <person name="Lazarevic D."/>
            <person name="Lipovich L."/>
            <person name="Liu J."/>
            <person name="Liuni S."/>
            <person name="McWilliam S."/>
            <person name="Madan Babu M."/>
            <person name="Madera M."/>
            <person name="Marchionni L."/>
            <person name="Matsuda H."/>
            <person name="Matsuzawa S."/>
            <person name="Miki H."/>
            <person name="Mignone F."/>
            <person name="Miyake S."/>
            <person name="Morris K."/>
            <person name="Mottagui-Tabar S."/>
            <person name="Mulder N."/>
            <person name="Nakano N."/>
            <person name="Nakauchi H."/>
            <person name="Ng P."/>
            <person name="Nilsson R."/>
            <person name="Nishiguchi S."/>
            <person name="Nishikawa S."/>
            <person name="Nori F."/>
            <person name="Ohara O."/>
            <person name="Okazaki Y."/>
            <person name="Orlando V."/>
            <person name="Pang K.C."/>
            <person name="Pavan W.J."/>
            <person name="Pavesi G."/>
            <person name="Pesole G."/>
            <person name="Petrovsky N."/>
            <person name="Piazza S."/>
            <person name="Reed J."/>
            <person name="Reid J.F."/>
            <person name="Ring B.Z."/>
            <person name="Ringwald M."/>
            <person name="Rost B."/>
            <person name="Ruan Y."/>
            <person name="Salzberg S.L."/>
            <person name="Sandelin A."/>
            <person name="Schneider C."/>
            <person name="Schoenbach C."/>
            <person name="Sekiguchi K."/>
            <person name="Semple C.A."/>
            <person name="Seno S."/>
            <person name="Sessa L."/>
            <person name="Sheng Y."/>
            <person name="Shibata Y."/>
            <person name="Shimada H."/>
            <person name="Shimada K."/>
            <person name="Silva D."/>
            <person name="Sinclair B."/>
            <person name="Sperling S."/>
            <person name="Stupka E."/>
            <person name="Sugiura K."/>
            <person name="Sultana R."/>
            <person name="Takenaka Y."/>
            <person name="Taki K."/>
            <person name="Tammoja K."/>
            <person name="Tan S.L."/>
            <person name="Tang S."/>
            <person name="Taylor M.S."/>
            <person name="Tegner J."/>
            <person name="Teichmann S.A."/>
            <person name="Ueda H.R."/>
            <person name="van Nimwegen E."/>
            <person name="Verardo R."/>
            <person name="Wei C.L."/>
            <person name="Yagi K."/>
            <person name="Yamanishi H."/>
            <person name="Zabarovsky E."/>
            <person name="Zhu S."/>
            <person name="Zimmer A."/>
            <person name="Hide W."/>
            <person name="Bult C."/>
            <person name="Grimmond S.M."/>
            <person name="Teasdale R.D."/>
            <person name="Liu E.T."/>
            <person name="Brusic V."/>
            <person name="Quackenbush J."/>
            <person name="Wahlestedt C."/>
            <person name="Mattick J.S."/>
            <person name="Hume D.A."/>
            <person name="Kai C."/>
            <person name="Sasaki D."/>
            <person name="Tomaru Y."/>
            <person name="Fukuda S."/>
            <person name="Kanamori-Katayama M."/>
            <person name="Suzuki M."/>
            <person name="Aoki J."/>
            <person name="Arakawa T."/>
            <person name="Iida J."/>
            <person name="Imamura K."/>
            <person name="Itoh M."/>
            <person name="Kato T."/>
            <person name="Kawaji H."/>
            <person name="Kawagashira N."/>
            <person name="Kawashima T."/>
            <person name="Kojima M."/>
            <person name="Kondo S."/>
            <person name="Konno H."/>
            <person name="Nakano K."/>
            <person name="Ninomiya N."/>
            <person name="Nishio T."/>
            <person name="Okada M."/>
            <person name="Plessy C."/>
            <person name="Shibata K."/>
            <person name="Shiraki T."/>
            <person name="Suzuki S."/>
            <person name="Tagami M."/>
            <person name="Waki K."/>
            <person name="Watahiki A."/>
            <person name="Okamura-Oho Y."/>
            <person name="Suzuki H."/>
            <person name="Kawai J."/>
            <person name="Hayashizaki Y."/>
        </authorList>
    </citation>
    <scope>NUCLEOTIDE SEQUENCE [LARGE SCALE MRNA]</scope>
    <source>
        <strain evidence="10">C57BL/6J</strain>
        <tissue evidence="10">Medulla oblongata</tissue>
    </source>
</reference>
<reference evidence="9" key="4">
    <citation type="journal article" date="2004" name="Genome Res.">
        <title>The status, quality, and expansion of the NIH full-length cDNA project: the Mammalian Gene Collection (MGC).</title>
        <authorList>
            <consortium name="The MGC Project Team"/>
        </authorList>
    </citation>
    <scope>NUCLEOTIDE SEQUENCE [LARGE SCALE MRNA]</scope>
</reference>
<reference key="5">
    <citation type="journal article" date="2005" name="J. Biol. Chem.">
        <title>Identification of mammalian proline transporter SIT1 (SLC6A20) with characteristics of classical system imino.</title>
        <authorList>
            <person name="Takanaga H."/>
            <person name="Mackenzie B."/>
            <person name="Suzuki Y."/>
            <person name="Hediger M.A."/>
        </authorList>
    </citation>
    <scope>DEVELOPMENTAL STAGE</scope>
</reference>
<reference evidence="8" key="6">
    <citation type="journal article" date="2006" name="Am. J. Physiol.">
        <title>Luminal kidney and intestine SLC6 amino acid transporters of B0AT-cluster and their tissue distribution in Mus musculus.</title>
        <authorList>
            <person name="Romeo E."/>
            <person name="Dave M.H."/>
            <person name="Bacic D."/>
            <person name="Ristic Z."/>
            <person name="Camargo S.M.R."/>
            <person name="Loffing J."/>
            <person name="Wagner C.A."/>
            <person name="Verrey F."/>
        </authorList>
    </citation>
    <scope>SUBCELLULAR LOCATION</scope>
</reference>
<reference key="7">
    <citation type="journal article" date="2021" name="EMBO Mol. Med.">
        <title>SLC6A20 transporter: a novel regulator of brain glycine homeostasis and NMDAR function.</title>
        <authorList>
            <person name="Bae M."/>
            <person name="Roh J.D."/>
            <person name="Kim Y."/>
            <person name="Kim S.S."/>
            <person name="Han H.M."/>
            <person name="Yang E."/>
            <person name="Kang H."/>
            <person name="Lee S."/>
            <person name="Kim J.Y."/>
            <person name="Kang R."/>
            <person name="Jung H."/>
            <person name="Yoo T."/>
            <person name="Kim H."/>
            <person name="Kim D."/>
            <person name="Oh H."/>
            <person name="Han S."/>
            <person name="Kim D."/>
            <person name="Han J."/>
            <person name="Bae Y.C."/>
            <person name="Kim H."/>
            <person name="Ahn S."/>
            <person name="Chan A.M."/>
            <person name="Lee D."/>
            <person name="Kim J.W."/>
            <person name="Kim E."/>
        </authorList>
    </citation>
    <scope>FUNCTION</scope>
    <scope>TISSUE SPECIFICITY</scope>
    <scope>TRANSPORTER ACTIVTITY</scope>
    <scope>BIOPHYSICOCHEMICAL PROPERTIES</scope>
</reference>
<evidence type="ECO:0000255" key="1"/>
<evidence type="ECO:0000269" key="2">
    <source>
    </source>
</evidence>
<evidence type="ECO:0000269" key="3">
    <source>
    </source>
</evidence>
<evidence type="ECO:0000269" key="4">
    <source>
    </source>
</evidence>
<evidence type="ECO:0000269" key="5">
    <source>
    </source>
</evidence>
<evidence type="ECO:0000303" key="6">
    <source>
    </source>
</evidence>
<evidence type="ECO:0000303" key="7">
    <source>
    </source>
</evidence>
<evidence type="ECO:0000305" key="8"/>
<evidence type="ECO:0000312" key="9">
    <source>
        <dbReference type="EMBL" id="AAI18934.1"/>
    </source>
</evidence>
<evidence type="ECO:0000312" key="10">
    <source>
        <dbReference type="EMBL" id="BAE24391.1"/>
    </source>
</evidence>
<evidence type="ECO:0000312" key="11">
    <source>
        <dbReference type="EMBL" id="CAD20989.1"/>
    </source>
</evidence>
<evidence type="ECO:0000312" key="12">
    <source>
        <dbReference type="EMBL" id="CAI80736.1"/>
    </source>
</evidence>
<evidence type="ECO:0000312" key="13">
    <source>
        <dbReference type="MGI" id="MGI:2143217"/>
    </source>
</evidence>